<accession>Q9RGW9</accession>
<evidence type="ECO:0000255" key="1">
    <source>
        <dbReference type="HAMAP-Rule" id="MF_01124"/>
    </source>
</evidence>
<organism>
    <name type="scientific">Listeria monocytogenes serovar 1/2a (strain ATCC BAA-679 / EGD-e)</name>
    <dbReference type="NCBI Taxonomy" id="169963"/>
    <lineage>
        <taxon>Bacteria</taxon>
        <taxon>Bacillati</taxon>
        <taxon>Bacillota</taxon>
        <taxon>Bacilli</taxon>
        <taxon>Bacillales</taxon>
        <taxon>Listeriaceae</taxon>
        <taxon>Listeria</taxon>
    </lineage>
</organism>
<protein>
    <recommendedName>
        <fullName evidence="1">Adapter protein MecA</fullName>
    </recommendedName>
</protein>
<gene>
    <name evidence="1" type="primary">mecA</name>
    <name type="ordered locus">lmo2190</name>
</gene>
<keyword id="KW-1185">Reference proteome</keyword>
<reference key="1">
    <citation type="journal article" date="2000" name="J. Bacteriol.">
        <title>Identification in Listeria monocytogenes of MecA, a homologue of the Bacillus subtilis competence regulatory protein.</title>
        <authorList>
            <person name="Borezee E."/>
            <person name="Msadek T."/>
            <person name="Durant L."/>
            <person name="Berche P."/>
        </authorList>
    </citation>
    <scope>NUCLEOTIDE SEQUENCE [GENOMIC DNA]</scope>
    <source>
        <strain>LO28 / Serovar 1/2c</strain>
    </source>
</reference>
<reference key="2">
    <citation type="journal article" date="2001" name="Science">
        <title>Comparative genomics of Listeria species.</title>
        <authorList>
            <person name="Glaser P."/>
            <person name="Frangeul L."/>
            <person name="Buchrieser C."/>
            <person name="Rusniok C."/>
            <person name="Amend A."/>
            <person name="Baquero F."/>
            <person name="Berche P."/>
            <person name="Bloecker H."/>
            <person name="Brandt P."/>
            <person name="Chakraborty T."/>
            <person name="Charbit A."/>
            <person name="Chetouani F."/>
            <person name="Couve E."/>
            <person name="de Daruvar A."/>
            <person name="Dehoux P."/>
            <person name="Domann E."/>
            <person name="Dominguez-Bernal G."/>
            <person name="Duchaud E."/>
            <person name="Durant L."/>
            <person name="Dussurget O."/>
            <person name="Entian K.-D."/>
            <person name="Fsihi H."/>
            <person name="Garcia-del Portillo F."/>
            <person name="Garrido P."/>
            <person name="Gautier L."/>
            <person name="Goebel W."/>
            <person name="Gomez-Lopez N."/>
            <person name="Hain T."/>
            <person name="Hauf J."/>
            <person name="Jackson D."/>
            <person name="Jones L.-M."/>
            <person name="Kaerst U."/>
            <person name="Kreft J."/>
            <person name="Kuhn M."/>
            <person name="Kunst F."/>
            <person name="Kurapkat G."/>
            <person name="Madueno E."/>
            <person name="Maitournam A."/>
            <person name="Mata Vicente J."/>
            <person name="Ng E."/>
            <person name="Nedjari H."/>
            <person name="Nordsiek G."/>
            <person name="Novella S."/>
            <person name="de Pablos B."/>
            <person name="Perez-Diaz J.-C."/>
            <person name="Purcell R."/>
            <person name="Remmel B."/>
            <person name="Rose M."/>
            <person name="Schlueter T."/>
            <person name="Simoes N."/>
            <person name="Tierrez A."/>
            <person name="Vazquez-Boland J.-A."/>
            <person name="Voss H."/>
            <person name="Wehland J."/>
            <person name="Cossart P."/>
        </authorList>
    </citation>
    <scope>NUCLEOTIDE SEQUENCE [LARGE SCALE GENOMIC DNA]</scope>
    <source>
        <strain>ATCC BAA-679 / EGD-e</strain>
    </source>
</reference>
<name>MECA_LISMO</name>
<comment type="function">
    <text evidence="1">Enables the recognition and targeting of unfolded and aggregated proteins to the ClpC protease or to other proteins involved in proteolysis.</text>
</comment>
<comment type="subunit">
    <text evidence="1">Homodimer.</text>
</comment>
<comment type="domain">
    <text>The N-terminal domain probably binds unfolded/aggregated proteins; the C-terminal domain interacts with ClpC.</text>
</comment>
<comment type="similarity">
    <text evidence="1">Belongs to the MecA family.</text>
</comment>
<dbReference type="EMBL" id="AF103794">
    <property type="protein sequence ID" value="AAF21894.1"/>
    <property type="molecule type" value="Genomic_DNA"/>
</dbReference>
<dbReference type="EMBL" id="AL591982">
    <property type="protein sequence ID" value="CAD00268.1"/>
    <property type="molecule type" value="Genomic_DNA"/>
</dbReference>
<dbReference type="PIR" id="AF1348">
    <property type="entry name" value="AF1348"/>
</dbReference>
<dbReference type="RefSeq" id="NP_465714.1">
    <property type="nucleotide sequence ID" value="NC_003210.1"/>
</dbReference>
<dbReference type="RefSeq" id="WP_003722314.1">
    <property type="nucleotide sequence ID" value="NZ_CP149495.1"/>
</dbReference>
<dbReference type="SMR" id="Q9RGW9"/>
<dbReference type="STRING" id="169963.gene:17594881"/>
<dbReference type="PaxDb" id="169963-lmo2190"/>
<dbReference type="EnsemblBacteria" id="CAD00268">
    <property type="protein sequence ID" value="CAD00268"/>
    <property type="gene ID" value="CAD00268"/>
</dbReference>
<dbReference type="GeneID" id="984925"/>
<dbReference type="KEGG" id="lmo:lmo2190"/>
<dbReference type="PATRIC" id="fig|169963.11.peg.2242"/>
<dbReference type="eggNOG" id="COG4862">
    <property type="taxonomic scope" value="Bacteria"/>
</dbReference>
<dbReference type="HOGENOM" id="CLU_071496_2_1_9"/>
<dbReference type="OrthoDB" id="2360201at2"/>
<dbReference type="PhylomeDB" id="Q9RGW9"/>
<dbReference type="BioCyc" id="LMON169963:LMO2190-MONOMER"/>
<dbReference type="Proteomes" id="UP000000817">
    <property type="component" value="Chromosome"/>
</dbReference>
<dbReference type="GO" id="GO:0030674">
    <property type="term" value="F:protein-macromolecule adaptor activity"/>
    <property type="evidence" value="ECO:0007669"/>
    <property type="project" value="UniProtKB-UniRule"/>
</dbReference>
<dbReference type="Gene3D" id="3.30.70.1950">
    <property type="match status" value="1"/>
</dbReference>
<dbReference type="HAMAP" id="MF_01124">
    <property type="entry name" value="MecA"/>
    <property type="match status" value="1"/>
</dbReference>
<dbReference type="InterPro" id="IPR038471">
    <property type="entry name" value="MecA_C_sf"/>
</dbReference>
<dbReference type="InterPro" id="IPR008681">
    <property type="entry name" value="Neg-reg_MecA"/>
</dbReference>
<dbReference type="NCBIfam" id="NF002644">
    <property type="entry name" value="PRK02315.1-5"/>
    <property type="match status" value="1"/>
</dbReference>
<dbReference type="PANTHER" id="PTHR39161">
    <property type="entry name" value="ADAPTER PROTEIN MECA"/>
    <property type="match status" value="1"/>
</dbReference>
<dbReference type="PANTHER" id="PTHR39161:SF1">
    <property type="entry name" value="ADAPTER PROTEIN MECA 1"/>
    <property type="match status" value="1"/>
</dbReference>
<dbReference type="Pfam" id="PF05389">
    <property type="entry name" value="MecA"/>
    <property type="match status" value="1"/>
</dbReference>
<dbReference type="PIRSF" id="PIRSF029008">
    <property type="entry name" value="MecA"/>
    <property type="match status" value="1"/>
</dbReference>
<sequence>MEIERINEDTIKFYISYLDLEERGFNQEDVWYDREKSEELFWDMMDELKYEEEFSPEGPLWIQVQALKHGLEVFVTKATIGGKGEDGFDVTLSSPDELAEEKIEKLLEENFNPVKKEALGEDDTLEFILEFRDFEDAISLSRATGLENLVTKLYSYQGKYYLNVEFPENKYDESNIDNAVSILLEYGLESNLTGYMLAEYGKVIFDVPALKQIRKHF</sequence>
<feature type="chain" id="PRO_0000212274" description="Adapter protein MecA">
    <location>
        <begin position="1"/>
        <end position="217"/>
    </location>
</feature>
<proteinExistence type="inferred from homology"/>